<gene>
    <name evidence="1" type="primary">dut</name>
    <name type="ordered locus">FTA_0246</name>
</gene>
<protein>
    <recommendedName>
        <fullName evidence="1">Deoxyuridine 5'-triphosphate nucleotidohydrolase</fullName>
        <shortName evidence="1">dUTPase</shortName>
        <ecNumber evidence="1">3.6.1.23</ecNumber>
    </recommendedName>
    <alternativeName>
        <fullName evidence="1">dUTP pyrophosphatase</fullName>
    </alternativeName>
</protein>
<keyword id="KW-0378">Hydrolase</keyword>
<keyword id="KW-0460">Magnesium</keyword>
<keyword id="KW-0479">Metal-binding</keyword>
<keyword id="KW-0546">Nucleotide metabolism</keyword>
<evidence type="ECO:0000255" key="1">
    <source>
        <dbReference type="HAMAP-Rule" id="MF_00116"/>
    </source>
</evidence>
<dbReference type="EC" id="3.6.1.23" evidence="1"/>
<dbReference type="EMBL" id="CP000803">
    <property type="protein sequence ID" value="ABU60723.1"/>
    <property type="molecule type" value="Genomic_DNA"/>
</dbReference>
<dbReference type="RefSeq" id="WP_003014311.1">
    <property type="nucleotide sequence ID" value="NC_009749.1"/>
</dbReference>
<dbReference type="SMR" id="A7N9S0"/>
<dbReference type="KEGG" id="fta:FTA_0246"/>
<dbReference type="HOGENOM" id="CLU_068508_1_1_6"/>
<dbReference type="UniPathway" id="UPA00610">
    <property type="reaction ID" value="UER00666"/>
</dbReference>
<dbReference type="GO" id="GO:0004170">
    <property type="term" value="F:dUTP diphosphatase activity"/>
    <property type="evidence" value="ECO:0007669"/>
    <property type="project" value="UniProtKB-UniRule"/>
</dbReference>
<dbReference type="GO" id="GO:0000287">
    <property type="term" value="F:magnesium ion binding"/>
    <property type="evidence" value="ECO:0007669"/>
    <property type="project" value="UniProtKB-UniRule"/>
</dbReference>
<dbReference type="GO" id="GO:0006226">
    <property type="term" value="P:dUMP biosynthetic process"/>
    <property type="evidence" value="ECO:0007669"/>
    <property type="project" value="UniProtKB-UniRule"/>
</dbReference>
<dbReference type="GO" id="GO:0046081">
    <property type="term" value="P:dUTP catabolic process"/>
    <property type="evidence" value="ECO:0007669"/>
    <property type="project" value="InterPro"/>
</dbReference>
<dbReference type="CDD" id="cd07557">
    <property type="entry name" value="trimeric_dUTPase"/>
    <property type="match status" value="1"/>
</dbReference>
<dbReference type="FunFam" id="2.70.40.10:FF:000002">
    <property type="entry name" value="dUTP diphosphatase"/>
    <property type="match status" value="1"/>
</dbReference>
<dbReference type="Gene3D" id="2.70.40.10">
    <property type="match status" value="1"/>
</dbReference>
<dbReference type="HAMAP" id="MF_00116">
    <property type="entry name" value="dUTPase_bact"/>
    <property type="match status" value="1"/>
</dbReference>
<dbReference type="InterPro" id="IPR008181">
    <property type="entry name" value="dUTPase"/>
</dbReference>
<dbReference type="InterPro" id="IPR029054">
    <property type="entry name" value="dUTPase-like"/>
</dbReference>
<dbReference type="InterPro" id="IPR036157">
    <property type="entry name" value="dUTPase-like_sf"/>
</dbReference>
<dbReference type="InterPro" id="IPR033704">
    <property type="entry name" value="dUTPase_trimeric"/>
</dbReference>
<dbReference type="NCBIfam" id="TIGR00576">
    <property type="entry name" value="dut"/>
    <property type="match status" value="1"/>
</dbReference>
<dbReference type="NCBIfam" id="NF001862">
    <property type="entry name" value="PRK00601.1"/>
    <property type="match status" value="1"/>
</dbReference>
<dbReference type="PANTHER" id="PTHR11241">
    <property type="entry name" value="DEOXYURIDINE 5'-TRIPHOSPHATE NUCLEOTIDOHYDROLASE"/>
    <property type="match status" value="1"/>
</dbReference>
<dbReference type="PANTHER" id="PTHR11241:SF0">
    <property type="entry name" value="DEOXYURIDINE 5'-TRIPHOSPHATE NUCLEOTIDOHYDROLASE"/>
    <property type="match status" value="1"/>
</dbReference>
<dbReference type="Pfam" id="PF00692">
    <property type="entry name" value="dUTPase"/>
    <property type="match status" value="1"/>
</dbReference>
<dbReference type="SUPFAM" id="SSF51283">
    <property type="entry name" value="dUTPase-like"/>
    <property type="match status" value="1"/>
</dbReference>
<feature type="chain" id="PRO_1000015468" description="Deoxyuridine 5'-triphosphate nucleotidohydrolase">
    <location>
        <begin position="1"/>
        <end position="148"/>
    </location>
</feature>
<feature type="binding site" evidence="1">
    <location>
        <begin position="67"/>
        <end position="69"/>
    </location>
    <ligand>
        <name>substrate</name>
    </ligand>
</feature>
<feature type="binding site" evidence="1">
    <location>
        <position position="80"/>
    </location>
    <ligand>
        <name>substrate</name>
    </ligand>
</feature>
<feature type="binding site" evidence="1">
    <location>
        <begin position="84"/>
        <end position="86"/>
    </location>
    <ligand>
        <name>substrate</name>
    </ligand>
</feature>
<feature type="binding site" evidence="1">
    <location>
        <position position="94"/>
    </location>
    <ligand>
        <name>substrate</name>
    </ligand>
</feature>
<sequence>MKVELKILNKELIKELPGYATEGSAAIDLRACISESIYLKSGECKLIATGIAINIANPNYAAMILPRSGLGHKKGLVLGNGTGLIDSDYQGELMVSCFNRSQETIEIEPLMRFAQLVIVPVVQANFEIVEDFSQQSVRATGGFGHTGV</sequence>
<reference key="1">
    <citation type="journal article" date="2009" name="PLoS ONE">
        <title>Complete genome sequence of Francisella tularensis subspecies holarctica FTNF002-00.</title>
        <authorList>
            <person name="Barabote R.D."/>
            <person name="Xie G."/>
            <person name="Brettin T.S."/>
            <person name="Hinrichs S.H."/>
            <person name="Fey P.D."/>
            <person name="Jay J.J."/>
            <person name="Engle J.L."/>
            <person name="Godbole S.D."/>
            <person name="Noronha J.M."/>
            <person name="Scheuermann R.H."/>
            <person name="Zhou L.W."/>
            <person name="Lion C."/>
            <person name="Dempsey M.P."/>
        </authorList>
    </citation>
    <scope>NUCLEOTIDE SEQUENCE [LARGE SCALE GENOMIC DNA]</scope>
    <source>
        <strain>FTNF002-00 / FTA</strain>
    </source>
</reference>
<name>DUT_FRATF</name>
<accession>A7N9S0</accession>
<organism>
    <name type="scientific">Francisella tularensis subsp. holarctica (strain FTNF002-00 / FTA)</name>
    <dbReference type="NCBI Taxonomy" id="458234"/>
    <lineage>
        <taxon>Bacteria</taxon>
        <taxon>Pseudomonadati</taxon>
        <taxon>Pseudomonadota</taxon>
        <taxon>Gammaproteobacteria</taxon>
        <taxon>Thiotrichales</taxon>
        <taxon>Francisellaceae</taxon>
        <taxon>Francisella</taxon>
    </lineage>
</organism>
<proteinExistence type="inferred from homology"/>
<comment type="function">
    <text evidence="1">This enzyme is involved in nucleotide metabolism: it produces dUMP, the immediate precursor of thymidine nucleotides and it decreases the intracellular concentration of dUTP so that uracil cannot be incorporated into DNA.</text>
</comment>
<comment type="catalytic activity">
    <reaction evidence="1">
        <text>dUTP + H2O = dUMP + diphosphate + H(+)</text>
        <dbReference type="Rhea" id="RHEA:10248"/>
        <dbReference type="ChEBI" id="CHEBI:15377"/>
        <dbReference type="ChEBI" id="CHEBI:15378"/>
        <dbReference type="ChEBI" id="CHEBI:33019"/>
        <dbReference type="ChEBI" id="CHEBI:61555"/>
        <dbReference type="ChEBI" id="CHEBI:246422"/>
        <dbReference type="EC" id="3.6.1.23"/>
    </reaction>
</comment>
<comment type="cofactor">
    <cofactor evidence="1">
        <name>Mg(2+)</name>
        <dbReference type="ChEBI" id="CHEBI:18420"/>
    </cofactor>
</comment>
<comment type="pathway">
    <text evidence="1">Pyrimidine metabolism; dUMP biosynthesis; dUMP from dCTP (dUTP route): step 2/2.</text>
</comment>
<comment type="similarity">
    <text evidence="1">Belongs to the dUTPase family.</text>
</comment>